<keyword id="KW-0342">GTP-binding</keyword>
<keyword id="KW-0460">Magnesium</keyword>
<keyword id="KW-0479">Metal-binding</keyword>
<keyword id="KW-0547">Nucleotide-binding</keyword>
<keyword id="KW-0548">Nucleotidyltransferase</keyword>
<keyword id="KW-1185">Reference proteome</keyword>
<keyword id="KW-0808">Transferase</keyword>
<keyword id="KW-0819">tRNA processing</keyword>
<name>THG1_EREGS</name>
<protein>
    <recommendedName>
        <fullName>tRNA(His) guanylyltransferase</fullName>
        <ecNumber evidence="2">2.7.7.79</ecNumber>
    </recommendedName>
    <alternativeName>
        <fullName>tRNA-histidine guanylyltransferase</fullName>
    </alternativeName>
</protein>
<dbReference type="EC" id="2.7.7.79" evidence="2"/>
<dbReference type="EMBL" id="AE016815">
    <property type="protein sequence ID" value="AAS50801.1"/>
    <property type="molecule type" value="Genomic_DNA"/>
</dbReference>
<dbReference type="RefSeq" id="NP_982977.1">
    <property type="nucleotide sequence ID" value="NM_208330.1"/>
</dbReference>
<dbReference type="SMR" id="Q75DJ3"/>
<dbReference type="FunCoup" id="Q75DJ3">
    <property type="interactions" value="789"/>
</dbReference>
<dbReference type="STRING" id="284811.Q75DJ3"/>
<dbReference type="EnsemblFungi" id="AAS50801">
    <property type="protein sequence ID" value="AAS50801"/>
    <property type="gene ID" value="AGOS_ABR031C"/>
</dbReference>
<dbReference type="GeneID" id="4619069"/>
<dbReference type="KEGG" id="ago:AGOS_ABR031C"/>
<dbReference type="eggNOG" id="KOG2721">
    <property type="taxonomic scope" value="Eukaryota"/>
</dbReference>
<dbReference type="HOGENOM" id="CLU_044271_0_1_1"/>
<dbReference type="InParanoid" id="Q75DJ3"/>
<dbReference type="OMA" id="WKQHTEI"/>
<dbReference type="OrthoDB" id="62560at2759"/>
<dbReference type="Proteomes" id="UP000000591">
    <property type="component" value="Chromosome II"/>
</dbReference>
<dbReference type="GO" id="GO:0005525">
    <property type="term" value="F:GTP binding"/>
    <property type="evidence" value="ECO:0007669"/>
    <property type="project" value="UniProtKB-KW"/>
</dbReference>
<dbReference type="GO" id="GO:0042802">
    <property type="term" value="F:identical protein binding"/>
    <property type="evidence" value="ECO:0007669"/>
    <property type="project" value="EnsemblFungi"/>
</dbReference>
<dbReference type="GO" id="GO:0000287">
    <property type="term" value="F:magnesium ion binding"/>
    <property type="evidence" value="ECO:0007669"/>
    <property type="project" value="InterPro"/>
</dbReference>
<dbReference type="GO" id="GO:0008193">
    <property type="term" value="F:tRNA guanylyltransferase activity"/>
    <property type="evidence" value="ECO:0000250"/>
    <property type="project" value="UniProtKB"/>
</dbReference>
<dbReference type="GO" id="GO:0006400">
    <property type="term" value="P:tRNA modification"/>
    <property type="evidence" value="ECO:0000250"/>
    <property type="project" value="UniProtKB"/>
</dbReference>
<dbReference type="GO" id="GO:0008033">
    <property type="term" value="P:tRNA processing"/>
    <property type="evidence" value="ECO:0000250"/>
    <property type="project" value="UniProtKB"/>
</dbReference>
<dbReference type="FunFam" id="3.30.70.3000:FF:000003">
    <property type="entry name" value="tRNA(His) guanylyltransferase"/>
    <property type="match status" value="1"/>
</dbReference>
<dbReference type="Gene3D" id="3.30.70.3000">
    <property type="match status" value="1"/>
</dbReference>
<dbReference type="InterPro" id="IPR025845">
    <property type="entry name" value="Thg1_C_dom"/>
</dbReference>
<dbReference type="InterPro" id="IPR024956">
    <property type="entry name" value="tRNAHis_GuaTrfase_cat"/>
</dbReference>
<dbReference type="InterPro" id="IPR007537">
    <property type="entry name" value="tRNAHis_GuaTrfase_Thg1"/>
</dbReference>
<dbReference type="InterPro" id="IPR038469">
    <property type="entry name" value="tRNAHis_GuaTrfase_Thg1_sf"/>
</dbReference>
<dbReference type="PANTHER" id="PTHR12729">
    <property type="entry name" value="TRNA(HIS) GUANYLYLTRANSFERASE-RELATED"/>
    <property type="match status" value="1"/>
</dbReference>
<dbReference type="PANTHER" id="PTHR12729:SF6">
    <property type="entry name" value="TRNA(HIS) GUANYLYLTRANSFERASE-RELATED"/>
    <property type="match status" value="1"/>
</dbReference>
<dbReference type="Pfam" id="PF04446">
    <property type="entry name" value="Thg1"/>
    <property type="match status" value="1"/>
</dbReference>
<dbReference type="Pfam" id="PF14413">
    <property type="entry name" value="Thg1C"/>
    <property type="match status" value="1"/>
</dbReference>
<dbReference type="PIRSF" id="PIRSF028980">
    <property type="entry name" value="tRNAHis_guanylyltransferase"/>
    <property type="match status" value="1"/>
</dbReference>
<reference key="1">
    <citation type="journal article" date="2004" name="Science">
        <title>The Ashbya gossypii genome as a tool for mapping the ancient Saccharomyces cerevisiae genome.</title>
        <authorList>
            <person name="Dietrich F.S."/>
            <person name="Voegeli S."/>
            <person name="Brachat S."/>
            <person name="Lerch A."/>
            <person name="Gates K."/>
            <person name="Steiner S."/>
            <person name="Mohr C."/>
            <person name="Poehlmann R."/>
            <person name="Luedi P."/>
            <person name="Choi S."/>
            <person name="Wing R.A."/>
            <person name="Flavier A."/>
            <person name="Gaffney T.D."/>
            <person name="Philippsen P."/>
        </authorList>
    </citation>
    <scope>NUCLEOTIDE SEQUENCE [LARGE SCALE GENOMIC DNA]</scope>
    <source>
        <strain>ATCC 10895 / CBS 109.51 / FGSC 9923 / NRRL Y-1056</strain>
    </source>
</reference>
<reference key="2">
    <citation type="journal article" date="2013" name="G3 (Bethesda)">
        <title>Genomes of Ashbya fungi isolated from insects reveal four mating-type loci, numerous translocations, lack of transposons, and distinct gene duplications.</title>
        <authorList>
            <person name="Dietrich F.S."/>
            <person name="Voegeli S."/>
            <person name="Kuo S."/>
            <person name="Philippsen P."/>
        </authorList>
    </citation>
    <scope>GENOME REANNOTATION</scope>
    <source>
        <strain>ATCC 10895 / CBS 109.51 / FGSC 9923 / NRRL Y-1056</strain>
    </source>
</reference>
<proteinExistence type="inferred from homology"/>
<evidence type="ECO:0000250" key="1"/>
<evidence type="ECO:0000250" key="2">
    <source>
        <dbReference type="UniProtKB" id="P53215"/>
    </source>
</evidence>
<evidence type="ECO:0000305" key="3"/>
<feature type="chain" id="PRO_0000284988" description="tRNA(His) guanylyltransferase">
    <location>
        <begin position="1"/>
        <end position="237"/>
    </location>
</feature>
<feature type="binding site" evidence="1">
    <location>
        <begin position="29"/>
        <end position="34"/>
    </location>
    <ligand>
        <name>GTP</name>
        <dbReference type="ChEBI" id="CHEBI:37565"/>
    </ligand>
</feature>
<feature type="binding site" evidence="1">
    <location>
        <position position="29"/>
    </location>
    <ligand>
        <name>Mg(2+)</name>
        <dbReference type="ChEBI" id="CHEBI:18420"/>
        <label>1</label>
        <note>catalytic</note>
    </ligand>
</feature>
<feature type="binding site" evidence="1">
    <location>
        <position position="29"/>
    </location>
    <ligand>
        <name>Mg(2+)</name>
        <dbReference type="ChEBI" id="CHEBI:18420"/>
        <label>2</label>
        <note>catalytic</note>
    </ligand>
</feature>
<feature type="binding site" evidence="1">
    <location>
        <position position="30"/>
    </location>
    <ligand>
        <name>Mg(2+)</name>
        <dbReference type="ChEBI" id="CHEBI:18420"/>
        <label>1</label>
        <note>catalytic</note>
    </ligand>
</feature>
<feature type="binding site" evidence="1">
    <location>
        <begin position="76"/>
        <end position="77"/>
    </location>
    <ligand>
        <name>GTP</name>
        <dbReference type="ChEBI" id="CHEBI:37565"/>
    </ligand>
</feature>
<feature type="binding site" evidence="1">
    <location>
        <position position="77"/>
    </location>
    <ligand>
        <name>Mg(2+)</name>
        <dbReference type="ChEBI" id="CHEBI:18420"/>
        <label>1</label>
        <note>catalytic</note>
    </ligand>
</feature>
<feature type="binding site" evidence="1">
    <location>
        <position position="77"/>
    </location>
    <ligand>
        <name>Mg(2+)</name>
        <dbReference type="ChEBI" id="CHEBI:18420"/>
        <label>2</label>
        <note>catalytic</note>
    </ligand>
</feature>
<accession>Q75DJ3</accession>
<organism>
    <name type="scientific">Eremothecium gossypii (strain ATCC 10895 / CBS 109.51 / FGSC 9923 / NRRL Y-1056)</name>
    <name type="common">Yeast</name>
    <name type="synonym">Ashbya gossypii</name>
    <dbReference type="NCBI Taxonomy" id="284811"/>
    <lineage>
        <taxon>Eukaryota</taxon>
        <taxon>Fungi</taxon>
        <taxon>Dikarya</taxon>
        <taxon>Ascomycota</taxon>
        <taxon>Saccharomycotina</taxon>
        <taxon>Saccharomycetes</taxon>
        <taxon>Saccharomycetales</taxon>
        <taxon>Saccharomycetaceae</taxon>
        <taxon>Eremothecium</taxon>
    </lineage>
</organism>
<gene>
    <name type="primary">THG1</name>
    <name type="ordered locus">ABR031C</name>
</gene>
<comment type="function">
    <text evidence="2">Adds a GMP to the 5'-end of tRNA(His) after transcription and RNase P cleavage.</text>
</comment>
<comment type="catalytic activity">
    <reaction evidence="2">
        <text>a 5'-end ribonucleotide-tRNA(His) + GTP + ATP + H2O = a 5'-end phospho-guanosine-ribonucleotide-tRNA(His) + AMP + 2 diphosphate + H(+)</text>
        <dbReference type="Rhea" id="RHEA:54564"/>
        <dbReference type="Rhea" id="RHEA-COMP:14193"/>
        <dbReference type="Rhea" id="RHEA-COMP:14917"/>
        <dbReference type="ChEBI" id="CHEBI:15377"/>
        <dbReference type="ChEBI" id="CHEBI:15378"/>
        <dbReference type="ChEBI" id="CHEBI:30616"/>
        <dbReference type="ChEBI" id="CHEBI:33019"/>
        <dbReference type="ChEBI" id="CHEBI:37565"/>
        <dbReference type="ChEBI" id="CHEBI:138282"/>
        <dbReference type="ChEBI" id="CHEBI:141847"/>
        <dbReference type="ChEBI" id="CHEBI:456215"/>
        <dbReference type="EC" id="2.7.7.79"/>
    </reaction>
</comment>
<comment type="cofactor">
    <cofactor evidence="1">
        <name>Mg(2+)</name>
        <dbReference type="ChEBI" id="CHEBI:18420"/>
    </cofactor>
    <text evidence="1">Binds 2 magnesium ions per subunit.</text>
</comment>
<comment type="similarity">
    <text evidence="3">Belongs to the tRNA(His) guanylyltransferase family.</text>
</comment>
<sequence>MAKSRFEYVREYEVHDTLLPETYIVVRIDGKHFHEFSQHYSFEKPNDERALKLMNASAKNVVMAYSGDIILAFGESDEYSFILRKDSTLFRRRRDKLSTLFVSLFTAQYVALWPKFFPEQPLSHKRLPFFDSRCVCYPNTTVVKDYLCWRYVDTHINNLYNTVFWNLVLKCNLTPREAEQRLSGTLSSDKQEILFSECGVNYNNESEMFKKGSLINRKGEIMHIDVVKQIDELFAGF</sequence>